<gene>
    <name type="primary">cbx</name>
    <name type="ORF">GD10043</name>
</gene>
<keyword id="KW-1185">Reference proteome</keyword>
<reference key="1">
    <citation type="journal article" date="2007" name="Nature">
        <title>Evolution of genes and genomes on the Drosophila phylogeny.</title>
        <authorList>
            <consortium name="Drosophila 12 genomes consortium"/>
        </authorList>
    </citation>
    <scope>NUCLEOTIDE SEQUENCE [LARGE SCALE GENOMIC DNA]</scope>
</reference>
<protein>
    <recommendedName>
        <fullName>Protein crossbronx</fullName>
    </recommendedName>
</protein>
<comment type="similarity">
    <text evidence="1">Belongs to the ubiquitin-conjugating enzyme family. FTS subfamily.</text>
</comment>
<comment type="caution">
    <text evidence="3">Lacks the conserved Cys residue necessary for ubiquitin-conjugating enzyme E2 activity.</text>
</comment>
<feature type="chain" id="PRO_0000379037" description="Protein crossbronx">
    <location>
        <begin position="1"/>
        <end position="244"/>
    </location>
</feature>
<feature type="domain" description="UBC core" evidence="1">
    <location>
        <begin position="20"/>
        <end position="176"/>
    </location>
</feature>
<feature type="region of interest" description="Disordered" evidence="2">
    <location>
        <begin position="209"/>
        <end position="244"/>
    </location>
</feature>
<accession>B4QHS6</accession>
<proteinExistence type="inferred from homology"/>
<sequence length="244" mass="28217">MTLDLDAHKKDDKLLITTIQQEYKILAEYKMIESEKLSGIYVIPSYANSLQWFGVFFGRQGLYAESVFRFTILLPDRFPDDKSLPTIIFQQDVIHPHVCPYTHSLDVSHAFPEWRCGEDHLWQLLKYLQVIFSDPLDSIRGIEVDKLKNREAAELLMNNKEEYVARVQENIKESKEHIFDTPPTEDPHYIVFEKFQQDVHGPVLERIKAGRSKQTEPSAQQGNGGHATGLSWVKEGEFKPLSIE</sequence>
<organism>
    <name type="scientific">Drosophila simulans</name>
    <name type="common">Fruit fly</name>
    <dbReference type="NCBI Taxonomy" id="7240"/>
    <lineage>
        <taxon>Eukaryota</taxon>
        <taxon>Metazoa</taxon>
        <taxon>Ecdysozoa</taxon>
        <taxon>Arthropoda</taxon>
        <taxon>Hexapoda</taxon>
        <taxon>Insecta</taxon>
        <taxon>Pterygota</taxon>
        <taxon>Neoptera</taxon>
        <taxon>Endopterygota</taxon>
        <taxon>Diptera</taxon>
        <taxon>Brachycera</taxon>
        <taxon>Muscomorpha</taxon>
        <taxon>Ephydroidea</taxon>
        <taxon>Drosophilidae</taxon>
        <taxon>Drosophila</taxon>
        <taxon>Sophophora</taxon>
    </lineage>
</organism>
<evidence type="ECO:0000255" key="1">
    <source>
        <dbReference type="PROSITE-ProRule" id="PRU00388"/>
    </source>
</evidence>
<evidence type="ECO:0000256" key="2">
    <source>
        <dbReference type="SAM" id="MobiDB-lite"/>
    </source>
</evidence>
<evidence type="ECO:0000305" key="3"/>
<name>AKTP1_DROSI</name>
<dbReference type="EMBL" id="CM000362">
    <property type="protein sequence ID" value="EDX06410.1"/>
    <property type="molecule type" value="Genomic_DNA"/>
</dbReference>
<dbReference type="SMR" id="B4QHS6"/>
<dbReference type="STRING" id="7240.B4QHS6"/>
<dbReference type="EnsemblMetazoa" id="FBtr0209953">
    <property type="protein sequence ID" value="FBpp0208445"/>
    <property type="gene ID" value="FBgn0181818"/>
</dbReference>
<dbReference type="EnsemblMetazoa" id="FBtr0364620">
    <property type="protein sequence ID" value="FBpp0328047"/>
    <property type="gene ID" value="FBgn0181818"/>
</dbReference>
<dbReference type="EnsemblMetazoa" id="XM_002080789.4">
    <property type="protein sequence ID" value="XP_002080825.1"/>
    <property type="gene ID" value="LOC6733781"/>
</dbReference>
<dbReference type="EnsemblMetazoa" id="XM_016167145.3">
    <property type="protein sequence ID" value="XP_016026733.1"/>
    <property type="gene ID" value="LOC6733781"/>
</dbReference>
<dbReference type="GeneID" id="6733781"/>
<dbReference type="CTD" id="47272"/>
<dbReference type="HOGENOM" id="CLU_083049_1_0_1"/>
<dbReference type="OMA" id="WGFPEWR"/>
<dbReference type="OrthoDB" id="5596422at2759"/>
<dbReference type="PhylomeDB" id="B4QHS6"/>
<dbReference type="ChiTaRS" id="Ubx">
    <property type="organism name" value="fly"/>
</dbReference>
<dbReference type="Proteomes" id="UP000000304">
    <property type="component" value="Chromosome 2R"/>
</dbReference>
<dbReference type="Bgee" id="FBgn0181818">
    <property type="expression patterns" value="Expressed in embryo and 3 other cell types or tissues"/>
</dbReference>
<dbReference type="GO" id="GO:0042742">
    <property type="term" value="P:defense response to bacterium"/>
    <property type="evidence" value="ECO:0007669"/>
    <property type="project" value="EnsemblMetazoa"/>
</dbReference>
<dbReference type="GO" id="GO:0007291">
    <property type="term" value="P:sperm individualization"/>
    <property type="evidence" value="ECO:0007669"/>
    <property type="project" value="EnsemblMetazoa"/>
</dbReference>
<dbReference type="CDD" id="cd23814">
    <property type="entry name" value="UEV_AKTIP"/>
    <property type="match status" value="1"/>
</dbReference>
<dbReference type="FunFam" id="3.10.110.10:FF:000121">
    <property type="entry name" value="Protein crossbronx"/>
    <property type="match status" value="1"/>
</dbReference>
<dbReference type="Gene3D" id="3.10.110.10">
    <property type="entry name" value="Ubiquitin Conjugating Enzyme"/>
    <property type="match status" value="1"/>
</dbReference>
<dbReference type="InterPro" id="IPR050113">
    <property type="entry name" value="Ub_conjugating_enzyme"/>
</dbReference>
<dbReference type="InterPro" id="IPR000608">
    <property type="entry name" value="UBQ-conjugat_E2_core"/>
</dbReference>
<dbReference type="InterPro" id="IPR016135">
    <property type="entry name" value="UBQ-conjugating_enzyme/RWD"/>
</dbReference>
<dbReference type="PANTHER" id="PTHR24067">
    <property type="entry name" value="UBIQUITIN-CONJUGATING ENZYME E2"/>
    <property type="match status" value="1"/>
</dbReference>
<dbReference type="Pfam" id="PF00179">
    <property type="entry name" value="UQ_con"/>
    <property type="match status" value="1"/>
</dbReference>
<dbReference type="SMART" id="SM00212">
    <property type="entry name" value="UBCc"/>
    <property type="match status" value="1"/>
</dbReference>
<dbReference type="SUPFAM" id="SSF54495">
    <property type="entry name" value="UBC-like"/>
    <property type="match status" value="1"/>
</dbReference>
<dbReference type="PROSITE" id="PS50127">
    <property type="entry name" value="UBC_2"/>
    <property type="match status" value="1"/>
</dbReference>